<protein>
    <recommendedName>
        <fullName evidence="1">Lysine--tRNA ligase</fullName>
        <ecNumber evidence="1">6.1.1.6</ecNumber>
    </recommendedName>
    <alternativeName>
        <fullName evidence="1">Lysyl-tRNA synthetase</fullName>
        <shortName evidence="1">LysRS</shortName>
    </alternativeName>
</protein>
<evidence type="ECO:0000255" key="1">
    <source>
        <dbReference type="HAMAP-Rule" id="MF_00252"/>
    </source>
</evidence>
<accession>A4TIC5</accession>
<proteinExistence type="inferred from homology"/>
<organism>
    <name type="scientific">Yersinia pestis (strain Pestoides F)</name>
    <dbReference type="NCBI Taxonomy" id="386656"/>
    <lineage>
        <taxon>Bacteria</taxon>
        <taxon>Pseudomonadati</taxon>
        <taxon>Pseudomonadota</taxon>
        <taxon>Gammaproteobacteria</taxon>
        <taxon>Enterobacterales</taxon>
        <taxon>Yersiniaceae</taxon>
        <taxon>Yersinia</taxon>
    </lineage>
</organism>
<dbReference type="EC" id="6.1.1.6" evidence="1"/>
<dbReference type="EMBL" id="CP000668">
    <property type="protein sequence ID" value="ABP39037.1"/>
    <property type="molecule type" value="Genomic_DNA"/>
</dbReference>
<dbReference type="RefSeq" id="WP_002209930.1">
    <property type="nucleotide sequence ID" value="NZ_CP009715.1"/>
</dbReference>
<dbReference type="SMR" id="A4TIC5"/>
<dbReference type="GeneID" id="57973752"/>
<dbReference type="KEGG" id="ypp:YPDSF_0628"/>
<dbReference type="PATRIC" id="fig|386656.14.peg.1947"/>
<dbReference type="GO" id="GO:0005829">
    <property type="term" value="C:cytosol"/>
    <property type="evidence" value="ECO:0007669"/>
    <property type="project" value="TreeGrafter"/>
</dbReference>
<dbReference type="GO" id="GO:0005524">
    <property type="term" value="F:ATP binding"/>
    <property type="evidence" value="ECO:0007669"/>
    <property type="project" value="UniProtKB-UniRule"/>
</dbReference>
<dbReference type="GO" id="GO:0004824">
    <property type="term" value="F:lysine-tRNA ligase activity"/>
    <property type="evidence" value="ECO:0007669"/>
    <property type="project" value="UniProtKB-UniRule"/>
</dbReference>
<dbReference type="GO" id="GO:0000287">
    <property type="term" value="F:magnesium ion binding"/>
    <property type="evidence" value="ECO:0007669"/>
    <property type="project" value="UniProtKB-UniRule"/>
</dbReference>
<dbReference type="GO" id="GO:0000049">
    <property type="term" value="F:tRNA binding"/>
    <property type="evidence" value="ECO:0007669"/>
    <property type="project" value="TreeGrafter"/>
</dbReference>
<dbReference type="GO" id="GO:0006430">
    <property type="term" value="P:lysyl-tRNA aminoacylation"/>
    <property type="evidence" value="ECO:0007669"/>
    <property type="project" value="UniProtKB-UniRule"/>
</dbReference>
<dbReference type="CDD" id="cd00775">
    <property type="entry name" value="LysRS_core"/>
    <property type="match status" value="1"/>
</dbReference>
<dbReference type="CDD" id="cd04322">
    <property type="entry name" value="LysRS_N"/>
    <property type="match status" value="1"/>
</dbReference>
<dbReference type="FunFam" id="2.40.50.140:FF:000024">
    <property type="entry name" value="Lysine--tRNA ligase"/>
    <property type="match status" value="1"/>
</dbReference>
<dbReference type="FunFam" id="3.30.930.10:FF:000001">
    <property type="entry name" value="Lysine--tRNA ligase"/>
    <property type="match status" value="1"/>
</dbReference>
<dbReference type="Gene3D" id="3.30.930.10">
    <property type="entry name" value="Bira Bifunctional Protein, Domain 2"/>
    <property type="match status" value="1"/>
</dbReference>
<dbReference type="Gene3D" id="2.40.50.140">
    <property type="entry name" value="Nucleic acid-binding proteins"/>
    <property type="match status" value="1"/>
</dbReference>
<dbReference type="HAMAP" id="MF_00252">
    <property type="entry name" value="Lys_tRNA_synth_class2"/>
    <property type="match status" value="1"/>
</dbReference>
<dbReference type="InterPro" id="IPR004364">
    <property type="entry name" value="Aa-tRNA-synt_II"/>
</dbReference>
<dbReference type="InterPro" id="IPR006195">
    <property type="entry name" value="aa-tRNA-synth_II"/>
</dbReference>
<dbReference type="InterPro" id="IPR045864">
    <property type="entry name" value="aa-tRNA-synth_II/BPL/LPL"/>
</dbReference>
<dbReference type="InterPro" id="IPR002313">
    <property type="entry name" value="Lys-tRNA-ligase_II"/>
</dbReference>
<dbReference type="InterPro" id="IPR034762">
    <property type="entry name" value="Lys-tRNA-ligase_II_bac/euk"/>
</dbReference>
<dbReference type="InterPro" id="IPR044136">
    <property type="entry name" value="Lys-tRNA-ligase_II_N"/>
</dbReference>
<dbReference type="InterPro" id="IPR018149">
    <property type="entry name" value="Lys-tRNA-synth_II_C"/>
</dbReference>
<dbReference type="InterPro" id="IPR012340">
    <property type="entry name" value="NA-bd_OB-fold"/>
</dbReference>
<dbReference type="InterPro" id="IPR004365">
    <property type="entry name" value="NA-bd_OB_tRNA"/>
</dbReference>
<dbReference type="NCBIfam" id="TIGR00499">
    <property type="entry name" value="lysS_bact"/>
    <property type="match status" value="1"/>
</dbReference>
<dbReference type="NCBIfam" id="NF001756">
    <property type="entry name" value="PRK00484.1"/>
    <property type="match status" value="1"/>
</dbReference>
<dbReference type="PANTHER" id="PTHR42918:SF15">
    <property type="entry name" value="LYSINE--TRNA LIGASE, CHLOROPLASTIC_MITOCHONDRIAL"/>
    <property type="match status" value="1"/>
</dbReference>
<dbReference type="PANTHER" id="PTHR42918">
    <property type="entry name" value="LYSYL-TRNA SYNTHETASE"/>
    <property type="match status" value="1"/>
</dbReference>
<dbReference type="Pfam" id="PF00152">
    <property type="entry name" value="tRNA-synt_2"/>
    <property type="match status" value="1"/>
</dbReference>
<dbReference type="Pfam" id="PF01336">
    <property type="entry name" value="tRNA_anti-codon"/>
    <property type="match status" value="1"/>
</dbReference>
<dbReference type="PIRSF" id="PIRSF039101">
    <property type="entry name" value="LysRS2"/>
    <property type="match status" value="1"/>
</dbReference>
<dbReference type="PRINTS" id="PR00982">
    <property type="entry name" value="TRNASYNTHLYS"/>
</dbReference>
<dbReference type="SUPFAM" id="SSF55681">
    <property type="entry name" value="Class II aaRS and biotin synthetases"/>
    <property type="match status" value="1"/>
</dbReference>
<dbReference type="SUPFAM" id="SSF50249">
    <property type="entry name" value="Nucleic acid-binding proteins"/>
    <property type="match status" value="1"/>
</dbReference>
<dbReference type="PROSITE" id="PS50862">
    <property type="entry name" value="AA_TRNA_LIGASE_II"/>
    <property type="match status" value="1"/>
</dbReference>
<reference key="1">
    <citation type="submission" date="2007-02" db="EMBL/GenBank/DDBJ databases">
        <title>Complete sequence of chromosome of Yersinia pestis Pestoides F.</title>
        <authorList>
            <consortium name="US DOE Joint Genome Institute"/>
            <person name="Copeland A."/>
            <person name="Lucas S."/>
            <person name="Lapidus A."/>
            <person name="Barry K."/>
            <person name="Detter J.C."/>
            <person name="Glavina del Rio T."/>
            <person name="Hammon N."/>
            <person name="Israni S."/>
            <person name="Dalin E."/>
            <person name="Tice H."/>
            <person name="Pitluck S."/>
            <person name="Di Bartolo G."/>
            <person name="Chain P."/>
            <person name="Malfatti S."/>
            <person name="Shin M."/>
            <person name="Vergez L."/>
            <person name="Schmutz J."/>
            <person name="Larimer F."/>
            <person name="Land M."/>
            <person name="Hauser L."/>
            <person name="Worsham P."/>
            <person name="Chu M."/>
            <person name="Bearden S."/>
            <person name="Garcia E."/>
            <person name="Richardson P."/>
        </authorList>
    </citation>
    <scope>NUCLEOTIDE SEQUENCE [LARGE SCALE GENOMIC DNA]</scope>
    <source>
        <strain>Pestoides F</strain>
    </source>
</reference>
<name>SYK_YERPP</name>
<keyword id="KW-0030">Aminoacyl-tRNA synthetase</keyword>
<keyword id="KW-0067">ATP-binding</keyword>
<keyword id="KW-0963">Cytoplasm</keyword>
<keyword id="KW-0436">Ligase</keyword>
<keyword id="KW-0460">Magnesium</keyword>
<keyword id="KW-0479">Metal-binding</keyword>
<keyword id="KW-0547">Nucleotide-binding</keyword>
<keyword id="KW-0648">Protein biosynthesis</keyword>
<sequence>MSEQKPQVAEQAQELNSELQARREKLAVLRGKGIAFPNDFRRENLSDQLHAEFDSKENEELEALNIDVTVAGRMMTRRIMGKASFVTLQDVGGRIQLYVSRDDLPEGVYNEEFKKWDLGDILGARGKLFKTKTGELSIHCSELRLLTKALRPLPDKFHGLADQETRYRQRYLDLIANDESRHTFKVRSQVMSGIRSFMVEKGFMEVETPMMQVIPGGASARPFVTHHNALDIDMYLRIAPELYLKRLVVGGFERVFEINRNFRNEGVSPRHNPEFTMMELYMAYADYKDLIVLTEELFRTLTETILGSSVVQYGEQTFDFGKPFAKLTMKEAICKYRPETNVADLDDMDKAVAIAESLGIKVEKSWGLGRIQCEIFEETAESHLIQPTFITEYPAEVSPLARRNDDNPFITDRFEFFIGGREIGNGFSELNDAEDQAQRFADQVSAKEAGDDEAMFYDEDYITALEHGLPPTAGLGIGIDRMVMLFTNSHTIRDVILFPAMRPVK</sequence>
<gene>
    <name evidence="1" type="primary">lysS</name>
    <name type="ordered locus">YPDSF_0628</name>
</gene>
<comment type="catalytic activity">
    <reaction evidence="1">
        <text>tRNA(Lys) + L-lysine + ATP = L-lysyl-tRNA(Lys) + AMP + diphosphate</text>
        <dbReference type="Rhea" id="RHEA:20792"/>
        <dbReference type="Rhea" id="RHEA-COMP:9696"/>
        <dbReference type="Rhea" id="RHEA-COMP:9697"/>
        <dbReference type="ChEBI" id="CHEBI:30616"/>
        <dbReference type="ChEBI" id="CHEBI:32551"/>
        <dbReference type="ChEBI" id="CHEBI:33019"/>
        <dbReference type="ChEBI" id="CHEBI:78442"/>
        <dbReference type="ChEBI" id="CHEBI:78529"/>
        <dbReference type="ChEBI" id="CHEBI:456215"/>
        <dbReference type="EC" id="6.1.1.6"/>
    </reaction>
</comment>
<comment type="cofactor">
    <cofactor evidence="1">
        <name>Mg(2+)</name>
        <dbReference type="ChEBI" id="CHEBI:18420"/>
    </cofactor>
    <text evidence="1">Binds 3 Mg(2+) ions per subunit.</text>
</comment>
<comment type="subunit">
    <text evidence="1">Homodimer.</text>
</comment>
<comment type="subcellular location">
    <subcellularLocation>
        <location evidence="1">Cytoplasm</location>
    </subcellularLocation>
</comment>
<comment type="similarity">
    <text evidence="1">Belongs to the class-II aminoacyl-tRNA synthetase family.</text>
</comment>
<feature type="chain" id="PRO_1000012969" description="Lysine--tRNA ligase">
    <location>
        <begin position="1"/>
        <end position="505"/>
    </location>
</feature>
<feature type="binding site" evidence="1">
    <location>
        <position position="415"/>
    </location>
    <ligand>
        <name>Mg(2+)</name>
        <dbReference type="ChEBI" id="CHEBI:18420"/>
        <label>1</label>
    </ligand>
</feature>
<feature type="binding site" evidence="1">
    <location>
        <position position="422"/>
    </location>
    <ligand>
        <name>Mg(2+)</name>
        <dbReference type="ChEBI" id="CHEBI:18420"/>
        <label>1</label>
    </ligand>
</feature>
<feature type="binding site" evidence="1">
    <location>
        <position position="422"/>
    </location>
    <ligand>
        <name>Mg(2+)</name>
        <dbReference type="ChEBI" id="CHEBI:18420"/>
        <label>2</label>
    </ligand>
</feature>